<protein>
    <recommendedName>
        <fullName>C-type lectin domain family 5 member A</fullName>
    </recommendedName>
    <alternativeName>
        <fullName>C-type lectin superfamily member 5</fullName>
    </alternativeName>
    <alternativeName>
        <fullName>Myeloid DAP12-associating lectin 1</fullName>
        <shortName>MDL-1</shortName>
    </alternativeName>
</protein>
<feature type="chain" id="PRO_0000046633" description="C-type lectin domain family 5 member A">
    <location>
        <begin position="1"/>
        <end position="190"/>
    </location>
</feature>
<feature type="topological domain" description="Cytoplasmic" evidence="2">
    <location>
        <begin position="1"/>
        <end position="4"/>
    </location>
</feature>
<feature type="transmembrane region" description="Helical; Signal-anchor for type II membrane protein" evidence="2">
    <location>
        <begin position="5"/>
        <end position="25"/>
    </location>
</feature>
<feature type="topological domain" description="Extracellular" evidence="2">
    <location>
        <begin position="26"/>
        <end position="190"/>
    </location>
</feature>
<feature type="domain" description="C-type lectin" evidence="3">
    <location>
        <begin position="80"/>
        <end position="186"/>
    </location>
</feature>
<feature type="glycosylation site" description="N-linked (GlcNAc...) asparagine" evidence="2">
    <location>
        <position position="51"/>
    </location>
</feature>
<feature type="glycosylation site" description="N-linked (GlcNAc...) asparagine" evidence="2">
    <location>
        <position position="146"/>
    </location>
</feature>
<feature type="glycosylation site" description="N-linked (GlcNAc...) asparagine" evidence="2">
    <location>
        <position position="153"/>
    </location>
</feature>
<feature type="disulfide bond" evidence="3">
    <location>
        <begin position="101"/>
        <end position="185"/>
    </location>
</feature>
<feature type="disulfide bond" evidence="3">
    <location>
        <begin position="163"/>
        <end position="177"/>
    </location>
</feature>
<feature type="splice variant" id="VSP_041577" description="In isoform 1." evidence="9 10">
    <original>PQVFGKSNDGFVPTESYGTTSVQNVSQIFG</original>
    <variation>SQIFG</variation>
    <location>
        <begin position="28"/>
        <end position="57"/>
    </location>
</feature>
<feature type="splice variant" id="VSP_012840" description="In isoform 2." evidence="10">
    <location>
        <position position="118"/>
    </location>
</feature>
<organism>
    <name type="scientific">Mus musculus</name>
    <name type="common">Mouse</name>
    <dbReference type="NCBI Taxonomy" id="10090"/>
    <lineage>
        <taxon>Eukaryota</taxon>
        <taxon>Metazoa</taxon>
        <taxon>Chordata</taxon>
        <taxon>Craniata</taxon>
        <taxon>Vertebrata</taxon>
        <taxon>Euteleostomi</taxon>
        <taxon>Mammalia</taxon>
        <taxon>Eutheria</taxon>
        <taxon>Euarchontoglires</taxon>
        <taxon>Glires</taxon>
        <taxon>Rodentia</taxon>
        <taxon>Myomorpha</taxon>
        <taxon>Muroidea</taxon>
        <taxon>Muridae</taxon>
        <taxon>Murinae</taxon>
        <taxon>Mus</taxon>
        <taxon>Mus</taxon>
    </lineage>
</organism>
<reference key="1">
    <citation type="journal article" date="1999" name="Proc. Natl. Acad. Sci. U.S.A.">
        <title>Myeloid DAP12-associating lectin (MDL)-1 is a cell surface receptor involved in the activation of myeloid cells.</title>
        <authorList>
            <person name="Bakker A.B.H."/>
            <person name="Baker E."/>
            <person name="Sutherland G.R."/>
            <person name="Phillips J.H."/>
            <person name="Lanier L.L."/>
        </authorList>
    </citation>
    <scope>NUCLEOTIDE SEQUENCE [MRNA] (ISOFORM 1)</scope>
    <scope>FUNCTION</scope>
    <scope>TISSUE SPECIFICITY</scope>
    <scope>INTERACTION WITH TYROBP</scope>
    <source>
        <strain>BALB/cJ</strain>
        <tissue>Myeloid</tissue>
    </source>
</reference>
<reference key="2">
    <citation type="journal article" date="2005" name="Science">
        <title>The transcriptional landscape of the mammalian genome.</title>
        <authorList>
            <person name="Carninci P."/>
            <person name="Kasukawa T."/>
            <person name="Katayama S."/>
            <person name="Gough J."/>
            <person name="Frith M.C."/>
            <person name="Maeda N."/>
            <person name="Oyama R."/>
            <person name="Ravasi T."/>
            <person name="Lenhard B."/>
            <person name="Wells C."/>
            <person name="Kodzius R."/>
            <person name="Shimokawa K."/>
            <person name="Bajic V.B."/>
            <person name="Brenner S.E."/>
            <person name="Batalov S."/>
            <person name="Forrest A.R."/>
            <person name="Zavolan M."/>
            <person name="Davis M.J."/>
            <person name="Wilming L.G."/>
            <person name="Aidinis V."/>
            <person name="Allen J.E."/>
            <person name="Ambesi-Impiombato A."/>
            <person name="Apweiler R."/>
            <person name="Aturaliya R.N."/>
            <person name="Bailey T.L."/>
            <person name="Bansal M."/>
            <person name="Baxter L."/>
            <person name="Beisel K.W."/>
            <person name="Bersano T."/>
            <person name="Bono H."/>
            <person name="Chalk A.M."/>
            <person name="Chiu K.P."/>
            <person name="Choudhary V."/>
            <person name="Christoffels A."/>
            <person name="Clutterbuck D.R."/>
            <person name="Crowe M.L."/>
            <person name="Dalla E."/>
            <person name="Dalrymple B.P."/>
            <person name="de Bono B."/>
            <person name="Della Gatta G."/>
            <person name="di Bernardo D."/>
            <person name="Down T."/>
            <person name="Engstrom P."/>
            <person name="Fagiolini M."/>
            <person name="Faulkner G."/>
            <person name="Fletcher C.F."/>
            <person name="Fukushima T."/>
            <person name="Furuno M."/>
            <person name="Futaki S."/>
            <person name="Gariboldi M."/>
            <person name="Georgii-Hemming P."/>
            <person name="Gingeras T.R."/>
            <person name="Gojobori T."/>
            <person name="Green R.E."/>
            <person name="Gustincich S."/>
            <person name="Harbers M."/>
            <person name="Hayashi Y."/>
            <person name="Hensch T.K."/>
            <person name="Hirokawa N."/>
            <person name="Hill D."/>
            <person name="Huminiecki L."/>
            <person name="Iacono M."/>
            <person name="Ikeo K."/>
            <person name="Iwama A."/>
            <person name="Ishikawa T."/>
            <person name="Jakt M."/>
            <person name="Kanapin A."/>
            <person name="Katoh M."/>
            <person name="Kawasawa Y."/>
            <person name="Kelso J."/>
            <person name="Kitamura H."/>
            <person name="Kitano H."/>
            <person name="Kollias G."/>
            <person name="Krishnan S.P."/>
            <person name="Kruger A."/>
            <person name="Kummerfeld S.K."/>
            <person name="Kurochkin I.V."/>
            <person name="Lareau L.F."/>
            <person name="Lazarevic D."/>
            <person name="Lipovich L."/>
            <person name="Liu J."/>
            <person name="Liuni S."/>
            <person name="McWilliam S."/>
            <person name="Madan Babu M."/>
            <person name="Madera M."/>
            <person name="Marchionni L."/>
            <person name="Matsuda H."/>
            <person name="Matsuzawa S."/>
            <person name="Miki H."/>
            <person name="Mignone F."/>
            <person name="Miyake S."/>
            <person name="Morris K."/>
            <person name="Mottagui-Tabar S."/>
            <person name="Mulder N."/>
            <person name="Nakano N."/>
            <person name="Nakauchi H."/>
            <person name="Ng P."/>
            <person name="Nilsson R."/>
            <person name="Nishiguchi S."/>
            <person name="Nishikawa S."/>
            <person name="Nori F."/>
            <person name="Ohara O."/>
            <person name="Okazaki Y."/>
            <person name="Orlando V."/>
            <person name="Pang K.C."/>
            <person name="Pavan W.J."/>
            <person name="Pavesi G."/>
            <person name="Pesole G."/>
            <person name="Petrovsky N."/>
            <person name="Piazza S."/>
            <person name="Reed J."/>
            <person name="Reid J.F."/>
            <person name="Ring B.Z."/>
            <person name="Ringwald M."/>
            <person name="Rost B."/>
            <person name="Ruan Y."/>
            <person name="Salzberg S.L."/>
            <person name="Sandelin A."/>
            <person name="Schneider C."/>
            <person name="Schoenbach C."/>
            <person name="Sekiguchi K."/>
            <person name="Semple C.A."/>
            <person name="Seno S."/>
            <person name="Sessa L."/>
            <person name="Sheng Y."/>
            <person name="Shibata Y."/>
            <person name="Shimada H."/>
            <person name="Shimada K."/>
            <person name="Silva D."/>
            <person name="Sinclair B."/>
            <person name="Sperling S."/>
            <person name="Stupka E."/>
            <person name="Sugiura K."/>
            <person name="Sultana R."/>
            <person name="Takenaka Y."/>
            <person name="Taki K."/>
            <person name="Tammoja K."/>
            <person name="Tan S.L."/>
            <person name="Tang S."/>
            <person name="Taylor M.S."/>
            <person name="Tegner J."/>
            <person name="Teichmann S.A."/>
            <person name="Ueda H.R."/>
            <person name="van Nimwegen E."/>
            <person name="Verardo R."/>
            <person name="Wei C.L."/>
            <person name="Yagi K."/>
            <person name="Yamanishi H."/>
            <person name="Zabarovsky E."/>
            <person name="Zhu S."/>
            <person name="Zimmer A."/>
            <person name="Hide W."/>
            <person name="Bult C."/>
            <person name="Grimmond S.M."/>
            <person name="Teasdale R.D."/>
            <person name="Liu E.T."/>
            <person name="Brusic V."/>
            <person name="Quackenbush J."/>
            <person name="Wahlestedt C."/>
            <person name="Mattick J.S."/>
            <person name="Hume D.A."/>
            <person name="Kai C."/>
            <person name="Sasaki D."/>
            <person name="Tomaru Y."/>
            <person name="Fukuda S."/>
            <person name="Kanamori-Katayama M."/>
            <person name="Suzuki M."/>
            <person name="Aoki J."/>
            <person name="Arakawa T."/>
            <person name="Iida J."/>
            <person name="Imamura K."/>
            <person name="Itoh M."/>
            <person name="Kato T."/>
            <person name="Kawaji H."/>
            <person name="Kawagashira N."/>
            <person name="Kawashima T."/>
            <person name="Kojima M."/>
            <person name="Kondo S."/>
            <person name="Konno H."/>
            <person name="Nakano K."/>
            <person name="Ninomiya N."/>
            <person name="Nishio T."/>
            <person name="Okada M."/>
            <person name="Plessy C."/>
            <person name="Shibata K."/>
            <person name="Shiraki T."/>
            <person name="Suzuki S."/>
            <person name="Tagami M."/>
            <person name="Waki K."/>
            <person name="Watahiki A."/>
            <person name="Okamura-Oho Y."/>
            <person name="Suzuki H."/>
            <person name="Kawai J."/>
            <person name="Hayashizaki Y."/>
        </authorList>
    </citation>
    <scope>NUCLEOTIDE SEQUENCE [LARGE SCALE MRNA] (ISOFORMS 1 AND 2)</scope>
    <source>
        <strain>C57BL/6J</strain>
        <tissue>Adipose tissue</tissue>
        <tissue>Bone</tissue>
    </source>
</reference>
<reference key="3">
    <citation type="submission" date="2005-09" db="EMBL/GenBank/DDBJ databases">
        <authorList>
            <person name="Mural R.J."/>
            <person name="Adams M.D."/>
            <person name="Myers E.W."/>
            <person name="Smith H.O."/>
            <person name="Venter J.C."/>
        </authorList>
    </citation>
    <scope>NUCLEOTIDE SEQUENCE [LARGE SCALE GENOMIC DNA]</scope>
</reference>
<reference key="4">
    <citation type="journal article" date="2004" name="Genome Res.">
        <title>The status, quality, and expansion of the NIH full-length cDNA project: the Mammalian Gene Collection (MGC).</title>
        <authorList>
            <consortium name="The MGC Project Team"/>
        </authorList>
    </citation>
    <scope>NUCLEOTIDE SEQUENCE [LARGE SCALE MRNA] (ISOFORM 3)</scope>
</reference>
<reference key="5">
    <citation type="journal article" date="2009" name="J. Leukoc. Biol.">
        <title>Expression and functional role of MDL-1 (CLEC5A) in mouse myeloid lineage cells.</title>
        <authorList>
            <person name="Aoki N."/>
            <person name="Kimura Y."/>
            <person name="Kimura S."/>
            <person name="Nagato T."/>
            <person name="Azumi M."/>
            <person name="Kobayashi H."/>
            <person name="Sato K."/>
            <person name="Tateno M."/>
        </authorList>
    </citation>
    <scope>TISSUE SPECIFICITY</scope>
    <scope>INTERACTION WITH HCST</scope>
    <scope>SUBCELLULAR LOCATION</scope>
    <scope>GLYCOSYLATION</scope>
    <scope>SIALIC ACID CONTENT</scope>
    <scope>INDUCTION</scope>
</reference>
<reference key="6">
    <citation type="journal article" date="2009" name="Proc. Natl. Acad. Sci. U.S.A.">
        <title>Signal adaptor DAP10 associates with MDL-1 and triggers osteoclastogenesis in cooperation with DAP12.</title>
        <authorList>
            <person name="Inui M."/>
            <person name="Kikuchi Y."/>
            <person name="Aoki N."/>
            <person name="Endo S."/>
            <person name="Maeda T."/>
            <person name="Sugahara-Tobinai A."/>
            <person name="Fujimura S."/>
            <person name="Nakamura A."/>
            <person name="Kumanogoh A."/>
            <person name="Colonna M."/>
            <person name="Takai T."/>
        </authorList>
    </citation>
    <scope>INTERACTION WITH HCST</scope>
    <scope>GLYCOSYLATION</scope>
    <scope>FUNCTION</scope>
</reference>
<reference key="7">
    <citation type="journal article" date="2010" name="J. Exp. Med.">
        <title>Myeloid DAP12-associating lectin (MDL)-1 regulates synovial inflammation and bone erosion associated with autoimmune arthritis.</title>
        <authorList>
            <person name="Joyce-Shaikh B."/>
            <person name="Bigler M.E."/>
            <person name="Chao C.C."/>
            <person name="Murphy E.E."/>
            <person name="Blumenschein W.M."/>
            <person name="Adamopoulos I.E."/>
            <person name="Heyworth P.G."/>
            <person name="Antonenko S."/>
            <person name="Bowman E.P."/>
            <person name="McClanahan T.K."/>
            <person name="Phillips J.H."/>
            <person name="Cua D.J."/>
        </authorList>
    </citation>
    <scope>FUNCTION</scope>
    <scope>TISSUE SPECIFICITY</scope>
    <scope>INDUCTION</scope>
    <scope>DISRUPTION PHENOTYPE</scope>
</reference>
<reference key="8">
    <citation type="journal article" date="2010" name="J. Clin. Virol.">
        <title>Expression profile of Japanese encephalitis virus induced neuroinflammation and its implication in disease severity.</title>
        <authorList>
            <person name="Gupta N."/>
            <person name="Lomash V."/>
            <person name="Rao P.V."/>
        </authorList>
    </citation>
    <scope>INVOLVEMENT IN JAPANESE ENCEPHALITIS VIRUS INFECTION</scope>
</reference>
<keyword id="KW-0025">Alternative splicing</keyword>
<keyword id="KW-1003">Cell membrane</keyword>
<keyword id="KW-1015">Disulfide bond</keyword>
<keyword id="KW-0325">Glycoprotein</keyword>
<keyword id="KW-0391">Immunity</keyword>
<keyword id="KW-0399">Innate immunity</keyword>
<keyword id="KW-0430">Lectin</keyword>
<keyword id="KW-0472">Membrane</keyword>
<keyword id="KW-1185">Reference proteome</keyword>
<keyword id="KW-0735">Signal-anchor</keyword>
<keyword id="KW-0812">Transmembrane</keyword>
<keyword id="KW-1133">Transmembrane helix</keyword>
<comment type="function">
    <text evidence="4 6 7">Functions as a positive regulator of osteoclastogenesis (PubMed:19251634). Cell surface receptor that signals via TYROBP (PubMed:10449773). Regulates inflammatory responses (PubMed:20212065).</text>
</comment>
<comment type="subunit">
    <text evidence="1 4 5 6">Monomer (By similarity). Homodimer (By similarity). The majority of CLEC5A is expressed as a monomeric form on macrophages (By similarity). Interacts with TYROBP/DAP12 (PubMed:10449773). The interaction with TYROBP is required for CLEC5 cell surface expression (PubMed:10449773). Interacts with HCST/DAP10 (PubMed:19074552, PubMed:19251634). Forms a CLEC5A/TYROBP/HCST trimolecular complex depending almost solely on TYROBP (PubMed:19251634).</text>
</comment>
<comment type="interaction">
    <interactant intactId="EBI-15761206">
        <id>Q9R007</id>
    </interactant>
    <interactant intactId="EBI-15761243">
        <id>Q9QUJ0</id>
        <label>Hcst</label>
    </interactant>
    <organismsDiffer>false</organismsDiffer>
    <experiments>3</experiments>
</comment>
<comment type="interaction">
    <interactant intactId="EBI-15761206">
        <id>Q9R007</id>
    </interactant>
    <interactant intactId="EBI-15687058">
        <id>O54885</id>
        <label>Tyrobp</label>
    </interactant>
    <organismsDiffer>false</organismsDiffer>
    <experiments>3</experiments>
</comment>
<comment type="subcellular location">
    <subcellularLocation>
        <location evidence="5">Cell membrane</location>
        <topology evidence="5">Single-pass type II membrane protein</topology>
    </subcellularLocation>
</comment>
<comment type="alternative products">
    <event type="alternative splicing"/>
    <isoform>
        <id>Q9R007-3</id>
        <name>3</name>
        <sequence type="displayed"/>
    </isoform>
    <isoform>
        <id>Q9R007-1</id>
        <name>1</name>
        <sequence type="described" ref="VSP_041577"/>
    </isoform>
    <isoform>
        <id>Q9R007-2</id>
        <name>2</name>
        <sequence type="described" ref="VSP_012840"/>
    </isoform>
</comment>
<comment type="tissue specificity">
    <text evidence="4 5 7">Strong expression in bone marrow cells and thioglycollate-induced neutrophils (at protein level) (PubMed:19074552). Expressed on granulocytes and monocytes from bone marrow and peripheral blood (PubMed:20212065). Expressed in macrophage cell line J-774, but not in T-cell lines, B-cell lines, or mast cell lines (PubMed:10449773).</text>
</comment>
<comment type="induction">
    <text evidence="5 7">By TNF in bone-marrow derived macrophage colony-stimulating factor-dependent macrophages (PubMed:20212065). Up-regulated during the differentiation of myeloid cell line 32Dcl3 into neutrophils (PubMed:19074552).</text>
</comment>
<comment type="PTM">
    <text evidence="5 6">N-glycosylated (PubMed:19074552, PubMed:19251634). Contains sialic acid residues (PubMed:19074552).</text>
</comment>
<comment type="disease">
    <text evidence="8">Involved in the pathogenetic mechanisms of Japanese encephalitis virus (JEV) infection of the brain. JEV infection of young mice results in increased expression of CLEC5A in spleen and brain with consequent activation of proinflammatory cytokine secretion.</text>
</comment>
<comment type="disruption phenotype">
    <text evidence="7">Mutants are viable, are born in the expected Mendelian ratios and have similar numbers of myeloid and lymphoid cell subsets as wild-type animals (PubMed:20212065). Inhibition of autoimmune joint inflammation and preservation of bone density (PubMed:20212065).</text>
</comment>
<comment type="miscellaneous">
    <text evidence="7">Acts as a key regulator of synovial injury and bone erosion during autoimmune joint inflammation when its activation leads to enhanced recruitment of inflammatory macrophages and neutrophils to the joints.</text>
</comment>
<comment type="online information" name="Functional Glycomics Gateway - Glycan Binding">
    <link uri="http://www.functionalglycomics.org/glycomics/GBPServlet?&amp;operationType=view&amp;cbpId=cbp_mou_Ctlect_177"/>
    <text>MDL-1</text>
</comment>
<name>CLC5A_MOUSE</name>
<sequence length="190" mass="21696">MNWHMIISGLIVVVIKVVGMTFFLLYFPQVFGKSNDGFVPTESYGTTSVQNVSQIFGRNDESTMPTRSYGTVCPRNWDFHQGKCFFFSFSESPWKDSMDYCATQGSTLAIVNTPEKLKYLQDIAGIENYFIGLVRQPGEKKWRWINNSVFNGNVTNQDQNFDCVTIGLTKTYDAASCEVSYRWICEMNAK</sequence>
<dbReference type="EMBL" id="AF139769">
    <property type="protein sequence ID" value="AAF02492.1"/>
    <property type="molecule type" value="mRNA"/>
</dbReference>
<dbReference type="EMBL" id="AK036697">
    <property type="protein sequence ID" value="BAC29537.1"/>
    <property type="molecule type" value="mRNA"/>
</dbReference>
<dbReference type="EMBL" id="AK046600">
    <property type="protein sequence ID" value="BAC32802.1"/>
    <property type="molecule type" value="mRNA"/>
</dbReference>
<dbReference type="EMBL" id="AK137482">
    <property type="protein sequence ID" value="BAE23374.1"/>
    <property type="molecule type" value="mRNA"/>
</dbReference>
<dbReference type="EMBL" id="CH466533">
    <property type="protein sequence ID" value="EDL13570.1"/>
    <property type="molecule type" value="Genomic_DNA"/>
</dbReference>
<dbReference type="EMBL" id="BC104364">
    <property type="protein sequence ID" value="AAI04365.1"/>
    <property type="molecule type" value="mRNA"/>
</dbReference>
<dbReference type="EMBL" id="BC104365">
    <property type="protein sequence ID" value="AAI04366.1"/>
    <property type="molecule type" value="mRNA"/>
</dbReference>
<dbReference type="CCDS" id="CCDS20036.1">
    <molecule id="Q9R007-3"/>
</dbReference>
<dbReference type="CCDS" id="CCDS20037.1">
    <molecule id="Q9R007-1"/>
</dbReference>
<dbReference type="RefSeq" id="NP_001033693.1">
    <molecule id="Q9R007-3"/>
    <property type="nucleotide sequence ID" value="NM_001038604.1"/>
</dbReference>
<dbReference type="RefSeq" id="NP_067339.1">
    <molecule id="Q9R007-1"/>
    <property type="nucleotide sequence ID" value="NM_021364.2"/>
</dbReference>
<dbReference type="SMR" id="Q9R007"/>
<dbReference type="CORUM" id="Q9R007"/>
<dbReference type="DIP" id="DIP-48775N"/>
<dbReference type="FunCoup" id="Q9R007">
    <property type="interactions" value="91"/>
</dbReference>
<dbReference type="IntAct" id="Q9R007">
    <property type="interactions" value="2"/>
</dbReference>
<dbReference type="STRING" id="10090.ENSMUSP00000121848"/>
<dbReference type="MEROPS" id="I63.002"/>
<dbReference type="GlyCosmos" id="Q9R007">
    <property type="glycosylation" value="3 sites, No reported glycans"/>
</dbReference>
<dbReference type="GlyGen" id="Q9R007">
    <property type="glycosylation" value="3 sites"/>
</dbReference>
<dbReference type="PaxDb" id="10090-ENSMUSP00000121848"/>
<dbReference type="ProteomicsDB" id="283368">
    <molecule id="Q9R007-3"/>
</dbReference>
<dbReference type="ProteomicsDB" id="283369">
    <molecule id="Q9R007-1"/>
</dbReference>
<dbReference type="ProteomicsDB" id="283370">
    <molecule id="Q9R007-2"/>
</dbReference>
<dbReference type="Antibodypedia" id="50228">
    <property type="antibodies" value="261 antibodies from 27 providers"/>
</dbReference>
<dbReference type="DNASU" id="23845"/>
<dbReference type="Ensembl" id="ENSMUST00000101491.11">
    <molecule id="Q9R007-1"/>
    <property type="protein sequence ID" value="ENSMUSP00000099030.5"/>
    <property type="gene ID" value="ENSMUSG00000029915.15"/>
</dbReference>
<dbReference type="Ensembl" id="ENSMUST00000129948.9">
    <molecule id="Q9R007-3"/>
    <property type="protein sequence ID" value="ENSMUSP00000121848.3"/>
    <property type="gene ID" value="ENSMUSG00000029915.15"/>
</dbReference>
<dbReference type="GeneID" id="23845"/>
<dbReference type="KEGG" id="mmu:23845"/>
<dbReference type="UCSC" id="uc009bna.1">
    <molecule id="Q9R007-3"/>
    <property type="organism name" value="mouse"/>
</dbReference>
<dbReference type="UCSC" id="uc009bnb.1">
    <molecule id="Q9R007-1"/>
    <property type="organism name" value="mouse"/>
</dbReference>
<dbReference type="UCSC" id="uc009bnc.1">
    <molecule id="Q9R007-2"/>
    <property type="organism name" value="mouse"/>
</dbReference>
<dbReference type="AGR" id="MGI:1345151"/>
<dbReference type="CTD" id="23601"/>
<dbReference type="MGI" id="MGI:1345151">
    <property type="gene designation" value="Clec5a"/>
</dbReference>
<dbReference type="VEuPathDB" id="HostDB:ENSMUSG00000029915"/>
<dbReference type="eggNOG" id="KOG4297">
    <property type="taxonomic scope" value="Eukaryota"/>
</dbReference>
<dbReference type="GeneTree" id="ENSGT00910000144330"/>
<dbReference type="HOGENOM" id="CLU_049894_15_0_1"/>
<dbReference type="InParanoid" id="Q9R007"/>
<dbReference type="OMA" id="WHWIDNS"/>
<dbReference type="OrthoDB" id="7357196at2759"/>
<dbReference type="PhylomeDB" id="Q9R007"/>
<dbReference type="TreeFam" id="TF337735"/>
<dbReference type="Reactome" id="R-MMU-2172127">
    <property type="pathway name" value="DAP12 interactions"/>
</dbReference>
<dbReference type="Reactome" id="R-MMU-6798695">
    <property type="pathway name" value="Neutrophil degranulation"/>
</dbReference>
<dbReference type="BioGRID-ORCS" id="23845">
    <property type="hits" value="2 hits in 79 CRISPR screens"/>
</dbReference>
<dbReference type="PRO" id="PR:Q9R007"/>
<dbReference type="Proteomes" id="UP000000589">
    <property type="component" value="Chromosome 6"/>
</dbReference>
<dbReference type="RNAct" id="Q9R007">
    <property type="molecule type" value="protein"/>
</dbReference>
<dbReference type="Bgee" id="ENSMUSG00000029915">
    <property type="expression patterns" value="Expressed in granulocyte and 50 other cell types or tissues"/>
</dbReference>
<dbReference type="ExpressionAtlas" id="Q9R007">
    <property type="expression patterns" value="baseline and differential"/>
</dbReference>
<dbReference type="GO" id="GO:0009986">
    <property type="term" value="C:cell surface"/>
    <property type="evidence" value="ECO:0000314"/>
    <property type="project" value="UniProtKB"/>
</dbReference>
<dbReference type="GO" id="GO:0005829">
    <property type="term" value="C:cytosol"/>
    <property type="evidence" value="ECO:0007669"/>
    <property type="project" value="Ensembl"/>
</dbReference>
<dbReference type="GO" id="GO:0005886">
    <property type="term" value="C:plasma membrane"/>
    <property type="evidence" value="ECO:0007669"/>
    <property type="project" value="UniProtKB-SubCell"/>
</dbReference>
<dbReference type="GO" id="GO:0030246">
    <property type="term" value="F:carbohydrate binding"/>
    <property type="evidence" value="ECO:0007669"/>
    <property type="project" value="UniProtKB-KW"/>
</dbReference>
<dbReference type="GO" id="GO:0001618">
    <property type="term" value="F:virus receptor activity"/>
    <property type="evidence" value="ECO:0000314"/>
    <property type="project" value="UniProtKB"/>
</dbReference>
<dbReference type="GO" id="GO:0045087">
    <property type="term" value="P:innate immune response"/>
    <property type="evidence" value="ECO:0000314"/>
    <property type="project" value="UniProtKB"/>
</dbReference>
<dbReference type="GO" id="GO:0030099">
    <property type="term" value="P:myeloid cell differentiation"/>
    <property type="evidence" value="ECO:0000316"/>
    <property type="project" value="MGI"/>
</dbReference>
<dbReference type="GO" id="GO:0043066">
    <property type="term" value="P:negative regulation of apoptotic process"/>
    <property type="evidence" value="ECO:0000314"/>
    <property type="project" value="UniProtKB"/>
</dbReference>
<dbReference type="GO" id="GO:0033033">
    <property type="term" value="P:negative regulation of myeloid cell apoptotic process"/>
    <property type="evidence" value="ECO:0000314"/>
    <property type="project" value="MGI"/>
</dbReference>
<dbReference type="GO" id="GO:0002076">
    <property type="term" value="P:osteoblast development"/>
    <property type="evidence" value="ECO:0000314"/>
    <property type="project" value="UniProtKB"/>
</dbReference>
<dbReference type="GO" id="GO:0001819">
    <property type="term" value="P:positive regulation of cytokine production"/>
    <property type="evidence" value="ECO:0000315"/>
    <property type="project" value="UniProtKB"/>
</dbReference>
<dbReference type="CDD" id="cd03593">
    <property type="entry name" value="CLECT_NK_receptors_like"/>
    <property type="match status" value="1"/>
</dbReference>
<dbReference type="FunFam" id="3.10.100.10:FF:000065">
    <property type="entry name" value="C-type lectin domain family 5 member A"/>
    <property type="match status" value="1"/>
</dbReference>
<dbReference type="Gene3D" id="3.10.100.10">
    <property type="entry name" value="Mannose-Binding Protein A, subunit A"/>
    <property type="match status" value="1"/>
</dbReference>
<dbReference type="InterPro" id="IPR001304">
    <property type="entry name" value="C-type_lectin-like"/>
</dbReference>
<dbReference type="InterPro" id="IPR016186">
    <property type="entry name" value="C-type_lectin-like/link_sf"/>
</dbReference>
<dbReference type="InterPro" id="IPR052869">
    <property type="entry name" value="CLEC5A"/>
</dbReference>
<dbReference type="InterPro" id="IPR016187">
    <property type="entry name" value="CTDL_fold"/>
</dbReference>
<dbReference type="InterPro" id="IPR033992">
    <property type="entry name" value="NKR-like_CTLD"/>
</dbReference>
<dbReference type="PANTHER" id="PTHR47536">
    <property type="entry name" value="C-TYPE LECTIN DOMAIN FAMILY 5 MEMBER A"/>
    <property type="match status" value="1"/>
</dbReference>
<dbReference type="PANTHER" id="PTHR47536:SF1">
    <property type="entry name" value="C-TYPE LECTIN DOMAIN FAMILY 5 MEMBER A"/>
    <property type="match status" value="1"/>
</dbReference>
<dbReference type="Pfam" id="PF00059">
    <property type="entry name" value="Lectin_C"/>
    <property type="match status" value="1"/>
</dbReference>
<dbReference type="SMART" id="SM00034">
    <property type="entry name" value="CLECT"/>
    <property type="match status" value="1"/>
</dbReference>
<dbReference type="SUPFAM" id="SSF56436">
    <property type="entry name" value="C-type lectin-like"/>
    <property type="match status" value="1"/>
</dbReference>
<dbReference type="PROSITE" id="PS50041">
    <property type="entry name" value="C_TYPE_LECTIN_2"/>
    <property type="match status" value="1"/>
</dbReference>
<gene>
    <name type="primary">Clec5a</name>
    <name type="synonym">Clecsf5</name>
    <name type="synonym">Mdl1</name>
</gene>
<accession>Q9R007</accession>
<accession>Q3SXC9</accession>
<accession>Q3UV97</accession>
<accession>Q8BL24</accession>
<proteinExistence type="evidence at protein level"/>
<evidence type="ECO:0000250" key="1">
    <source>
        <dbReference type="UniProtKB" id="Q9NY25"/>
    </source>
</evidence>
<evidence type="ECO:0000255" key="2"/>
<evidence type="ECO:0000255" key="3">
    <source>
        <dbReference type="PROSITE-ProRule" id="PRU00040"/>
    </source>
</evidence>
<evidence type="ECO:0000269" key="4">
    <source>
    </source>
</evidence>
<evidence type="ECO:0000269" key="5">
    <source>
    </source>
</evidence>
<evidence type="ECO:0000269" key="6">
    <source>
    </source>
</evidence>
<evidence type="ECO:0000269" key="7">
    <source>
    </source>
</evidence>
<evidence type="ECO:0000269" key="8">
    <source>
    </source>
</evidence>
<evidence type="ECO:0000303" key="9">
    <source>
    </source>
</evidence>
<evidence type="ECO:0000303" key="10">
    <source>
    </source>
</evidence>